<gene>
    <name evidence="1" type="primary">hcp</name>
    <name type="ordered locus">Pmob_1163</name>
</gene>
<keyword id="KW-0004">4Fe-4S</keyword>
<keyword id="KW-0963">Cytoplasm</keyword>
<keyword id="KW-0408">Iron</keyword>
<keyword id="KW-0411">Iron-sulfur</keyword>
<keyword id="KW-0479">Metal-binding</keyword>
<keyword id="KW-0560">Oxidoreductase</keyword>
<proteinExistence type="inferred from homology"/>
<protein>
    <recommendedName>
        <fullName evidence="1">Hydroxylamine reductase</fullName>
        <ecNumber evidence="1">1.7.99.1</ecNumber>
    </recommendedName>
    <alternativeName>
        <fullName evidence="1">Hybrid-cluster protein</fullName>
        <shortName evidence="1">HCP</shortName>
    </alternativeName>
    <alternativeName>
        <fullName evidence="1">Prismane protein</fullName>
    </alternativeName>
</protein>
<feature type="chain" id="PRO_1000075115" description="Hydroxylamine reductase">
    <location>
        <begin position="1"/>
        <end position="543"/>
    </location>
</feature>
<feature type="binding site" evidence="1">
    <location>
        <position position="5"/>
    </location>
    <ligand>
        <name>[4Fe-4S] cluster</name>
        <dbReference type="ChEBI" id="CHEBI:49883"/>
    </ligand>
</feature>
<feature type="binding site" evidence="1">
    <location>
        <position position="8"/>
    </location>
    <ligand>
        <name>[4Fe-4S] cluster</name>
        <dbReference type="ChEBI" id="CHEBI:49883"/>
    </ligand>
</feature>
<feature type="binding site" evidence="1">
    <location>
        <position position="17"/>
    </location>
    <ligand>
        <name>[4Fe-4S] cluster</name>
        <dbReference type="ChEBI" id="CHEBI:49883"/>
    </ligand>
</feature>
<feature type="binding site" evidence="1">
    <location>
        <position position="23"/>
    </location>
    <ligand>
        <name>[4Fe-4S] cluster</name>
        <dbReference type="ChEBI" id="CHEBI:49883"/>
    </ligand>
</feature>
<feature type="binding site" evidence="1">
    <location>
        <position position="250"/>
    </location>
    <ligand>
        <name>hybrid [4Fe-2O-2S] cluster</name>
        <dbReference type="ChEBI" id="CHEBI:60519"/>
    </ligand>
</feature>
<feature type="binding site" evidence="1">
    <location>
        <position position="274"/>
    </location>
    <ligand>
        <name>hybrid [4Fe-2O-2S] cluster</name>
        <dbReference type="ChEBI" id="CHEBI:60519"/>
    </ligand>
</feature>
<feature type="binding site" evidence="1">
    <location>
        <position position="318"/>
    </location>
    <ligand>
        <name>hybrid [4Fe-2O-2S] cluster</name>
        <dbReference type="ChEBI" id="CHEBI:60519"/>
    </ligand>
</feature>
<feature type="binding site" description="via persulfide group" evidence="1">
    <location>
        <position position="410"/>
    </location>
    <ligand>
        <name>hybrid [4Fe-2O-2S] cluster</name>
        <dbReference type="ChEBI" id="CHEBI:60519"/>
    </ligand>
</feature>
<feature type="binding site" evidence="1">
    <location>
        <position position="438"/>
    </location>
    <ligand>
        <name>hybrid [4Fe-2O-2S] cluster</name>
        <dbReference type="ChEBI" id="CHEBI:60519"/>
    </ligand>
</feature>
<feature type="binding site" evidence="1">
    <location>
        <position position="463"/>
    </location>
    <ligand>
        <name>hybrid [4Fe-2O-2S] cluster</name>
        <dbReference type="ChEBI" id="CHEBI:60519"/>
    </ligand>
</feature>
<feature type="binding site" evidence="1">
    <location>
        <position position="498"/>
    </location>
    <ligand>
        <name>hybrid [4Fe-2O-2S] cluster</name>
        <dbReference type="ChEBI" id="CHEBI:60519"/>
    </ligand>
</feature>
<feature type="binding site" evidence="1">
    <location>
        <position position="500"/>
    </location>
    <ligand>
        <name>hybrid [4Fe-2O-2S] cluster</name>
        <dbReference type="ChEBI" id="CHEBI:60519"/>
    </ligand>
</feature>
<feature type="modified residue" description="Cysteine persulfide" evidence="1">
    <location>
        <position position="410"/>
    </location>
</feature>
<evidence type="ECO:0000255" key="1">
    <source>
        <dbReference type="HAMAP-Rule" id="MF_00069"/>
    </source>
</evidence>
<comment type="function">
    <text evidence="1">Catalyzes the reduction of hydroxylamine to form NH(3) and H(2)O.</text>
</comment>
<comment type="catalytic activity">
    <reaction evidence="1">
        <text>A + NH4(+) + H2O = hydroxylamine + AH2 + H(+)</text>
        <dbReference type="Rhea" id="RHEA:22052"/>
        <dbReference type="ChEBI" id="CHEBI:13193"/>
        <dbReference type="ChEBI" id="CHEBI:15377"/>
        <dbReference type="ChEBI" id="CHEBI:15378"/>
        <dbReference type="ChEBI" id="CHEBI:15429"/>
        <dbReference type="ChEBI" id="CHEBI:17499"/>
        <dbReference type="ChEBI" id="CHEBI:28938"/>
        <dbReference type="EC" id="1.7.99.1"/>
    </reaction>
</comment>
<comment type="cofactor">
    <cofactor evidence="1">
        <name>[4Fe-4S] cluster</name>
        <dbReference type="ChEBI" id="CHEBI:49883"/>
    </cofactor>
    <text evidence="1">Binds 1 [4Fe-4S] cluster.</text>
</comment>
<comment type="cofactor">
    <cofactor evidence="1">
        <name>hybrid [4Fe-2O-2S] cluster</name>
        <dbReference type="ChEBI" id="CHEBI:60519"/>
    </cofactor>
    <text evidence="1">Binds 1 hybrid [4Fe-2O-2S] cluster.</text>
</comment>
<comment type="subcellular location">
    <subcellularLocation>
        <location evidence="1">Cytoplasm</location>
    </subcellularLocation>
</comment>
<comment type="similarity">
    <text evidence="1">Belongs to the HCP family.</text>
</comment>
<reference key="1">
    <citation type="submission" date="2007-11" db="EMBL/GenBank/DDBJ databases">
        <title>Complete sequence of Petroga mobilis SJ95.</title>
        <authorList>
            <consortium name="US DOE Joint Genome Institute"/>
            <person name="Copeland A."/>
            <person name="Lucas S."/>
            <person name="Lapidus A."/>
            <person name="Barry K."/>
            <person name="Glavina del Rio T."/>
            <person name="Dalin E."/>
            <person name="Tice H."/>
            <person name="Pitluck S."/>
            <person name="Meincke L."/>
            <person name="Brettin T."/>
            <person name="Bruce D."/>
            <person name="Detter J.C."/>
            <person name="Han C."/>
            <person name="Kuske C.R."/>
            <person name="Schmutz J."/>
            <person name="Larimer F."/>
            <person name="Land M."/>
            <person name="Hauser L."/>
            <person name="Kyrpides N."/>
            <person name="Mikhailova N."/>
            <person name="Noll K."/>
            <person name="Richardson P."/>
        </authorList>
    </citation>
    <scope>NUCLEOTIDE SEQUENCE [LARGE SCALE GENOMIC DNA]</scope>
    <source>
        <strain>DSM 10674 / SJ95</strain>
    </source>
</reference>
<organism>
    <name type="scientific">Petrotoga mobilis (strain DSM 10674 / SJ95)</name>
    <dbReference type="NCBI Taxonomy" id="403833"/>
    <lineage>
        <taxon>Bacteria</taxon>
        <taxon>Thermotogati</taxon>
        <taxon>Thermotogota</taxon>
        <taxon>Thermotogae</taxon>
        <taxon>Petrotogales</taxon>
        <taxon>Petrotogaceae</taxon>
        <taxon>Petrotoga</taxon>
    </lineage>
</organism>
<name>HCP_PETMO</name>
<sequence length="543" mass="61018">MEMFCYQCQETLRNEACVAQGVCGKSPETANLQDLLIYVLKGISYWANKARELNVEDESVDLFVAEGLFVTITNVNFDEGRIVEYIDEAVDKRRIIENKFKEVYEKKYNEKFQEKVPDAAVWNPKDNNEDEYLNKAVEVGVLSESDEDIRSLKNFLVIGLKGVAAYTDHAYILKHSNDDILAFIEKALAETLREDITVDELMNLVLKIGEYGVNAMALLDEANTSTFGNPEITQVYTGTYETPAILVSGHDLLDLYEILEQTKGKGIKVYTHGEMLPANAYPGLKKYEHLAGNFGGSWWKQQQEFEDFGGAVVMTTNCIQKPRNSYKDRIFTTGLVGWPDVQHIPNRKKDGQKDFTPVIQKALEIGPIKKREGKAITIGFAHEQTAQVADKIVEAVKSGKITKFYVMGGCDGRNKDREYYTNFAKDLPKSAVILTAGCAKYRYNMLDLGDIDGIPRVIDAGQCNDSYSLVLTALKLKEAFDLKDINELPIEYNIAWYEQKAVTVLLSLLYMGVKGIRLGPTLPAFLSPNVLETVAKTFDIKTI</sequence>
<accession>A9BHK9</accession>
<dbReference type="EC" id="1.7.99.1" evidence="1"/>
<dbReference type="EMBL" id="CP000879">
    <property type="protein sequence ID" value="ABX31881.1"/>
    <property type="molecule type" value="Genomic_DNA"/>
</dbReference>
<dbReference type="RefSeq" id="WP_012208982.1">
    <property type="nucleotide sequence ID" value="NC_010003.1"/>
</dbReference>
<dbReference type="SMR" id="A9BHK9"/>
<dbReference type="STRING" id="403833.Pmob_1163"/>
<dbReference type="KEGG" id="pmo:Pmob_1163"/>
<dbReference type="eggNOG" id="COG1151">
    <property type="taxonomic scope" value="Bacteria"/>
</dbReference>
<dbReference type="HOGENOM" id="CLU_038344_2_0_0"/>
<dbReference type="Proteomes" id="UP000000789">
    <property type="component" value="Chromosome"/>
</dbReference>
<dbReference type="GO" id="GO:0005737">
    <property type="term" value="C:cytoplasm"/>
    <property type="evidence" value="ECO:0007669"/>
    <property type="project" value="UniProtKB-SubCell"/>
</dbReference>
<dbReference type="GO" id="GO:0051539">
    <property type="term" value="F:4 iron, 4 sulfur cluster binding"/>
    <property type="evidence" value="ECO:0007669"/>
    <property type="project" value="UniProtKB-KW"/>
</dbReference>
<dbReference type="GO" id="GO:0050418">
    <property type="term" value="F:hydroxylamine reductase activity"/>
    <property type="evidence" value="ECO:0007669"/>
    <property type="project" value="UniProtKB-UniRule"/>
</dbReference>
<dbReference type="GO" id="GO:0046872">
    <property type="term" value="F:metal ion binding"/>
    <property type="evidence" value="ECO:0007669"/>
    <property type="project" value="UniProtKB-KW"/>
</dbReference>
<dbReference type="GO" id="GO:0004601">
    <property type="term" value="F:peroxidase activity"/>
    <property type="evidence" value="ECO:0007669"/>
    <property type="project" value="TreeGrafter"/>
</dbReference>
<dbReference type="GO" id="GO:0042542">
    <property type="term" value="P:response to hydrogen peroxide"/>
    <property type="evidence" value="ECO:0007669"/>
    <property type="project" value="TreeGrafter"/>
</dbReference>
<dbReference type="CDD" id="cd01914">
    <property type="entry name" value="HCP"/>
    <property type="match status" value="1"/>
</dbReference>
<dbReference type="FunFam" id="1.20.1270.20:FF:000001">
    <property type="entry name" value="Hydroxylamine reductase"/>
    <property type="match status" value="1"/>
</dbReference>
<dbReference type="FunFam" id="3.40.50.2030:FF:000002">
    <property type="entry name" value="Hydroxylamine reductase"/>
    <property type="match status" value="1"/>
</dbReference>
<dbReference type="Gene3D" id="1.20.1270.20">
    <property type="match status" value="2"/>
</dbReference>
<dbReference type="Gene3D" id="3.40.50.2030">
    <property type="match status" value="2"/>
</dbReference>
<dbReference type="HAMAP" id="MF_00069">
    <property type="entry name" value="Hydroxylam_reduct"/>
    <property type="match status" value="1"/>
</dbReference>
<dbReference type="InterPro" id="IPR004137">
    <property type="entry name" value="HCP/CODH"/>
</dbReference>
<dbReference type="InterPro" id="IPR010048">
    <property type="entry name" value="Hydroxylam_reduct"/>
</dbReference>
<dbReference type="InterPro" id="IPR016099">
    <property type="entry name" value="Prismane-like_a/b-sand"/>
</dbReference>
<dbReference type="InterPro" id="IPR011254">
    <property type="entry name" value="Prismane-like_sf"/>
</dbReference>
<dbReference type="InterPro" id="IPR016100">
    <property type="entry name" value="Prismane_a-bundle"/>
</dbReference>
<dbReference type="NCBIfam" id="TIGR01703">
    <property type="entry name" value="hybrid_clust"/>
    <property type="match status" value="1"/>
</dbReference>
<dbReference type="NCBIfam" id="NF003658">
    <property type="entry name" value="PRK05290.1"/>
    <property type="match status" value="1"/>
</dbReference>
<dbReference type="PANTHER" id="PTHR30109">
    <property type="entry name" value="HYDROXYLAMINE REDUCTASE"/>
    <property type="match status" value="1"/>
</dbReference>
<dbReference type="PANTHER" id="PTHR30109:SF0">
    <property type="entry name" value="HYDROXYLAMINE REDUCTASE"/>
    <property type="match status" value="1"/>
</dbReference>
<dbReference type="Pfam" id="PF03063">
    <property type="entry name" value="Prismane"/>
    <property type="match status" value="1"/>
</dbReference>
<dbReference type="PIRSF" id="PIRSF000076">
    <property type="entry name" value="HCP"/>
    <property type="match status" value="1"/>
</dbReference>
<dbReference type="SUPFAM" id="SSF56821">
    <property type="entry name" value="Prismane protein-like"/>
    <property type="match status" value="1"/>
</dbReference>